<proteinExistence type="evidence at transcript level"/>
<dbReference type="EC" id="1.1.1.41"/>
<dbReference type="EMBL" id="AF009036">
    <property type="protein sequence ID" value="AAB63461.1"/>
    <property type="molecule type" value="mRNA"/>
</dbReference>
<dbReference type="SMR" id="O13302"/>
<dbReference type="VEuPathDB" id="FungiDB:I7I52_11883"/>
<dbReference type="OrthoDB" id="10261637at2759"/>
<dbReference type="GO" id="GO:0005739">
    <property type="term" value="C:mitochondrion"/>
    <property type="evidence" value="ECO:0007669"/>
    <property type="project" value="UniProtKB-SubCell"/>
</dbReference>
<dbReference type="GO" id="GO:0004449">
    <property type="term" value="F:isocitrate dehydrogenase (NAD+) activity"/>
    <property type="evidence" value="ECO:0007669"/>
    <property type="project" value="UniProtKB-EC"/>
</dbReference>
<dbReference type="GO" id="GO:0000287">
    <property type="term" value="F:magnesium ion binding"/>
    <property type="evidence" value="ECO:0007669"/>
    <property type="project" value="InterPro"/>
</dbReference>
<dbReference type="GO" id="GO:0051287">
    <property type="term" value="F:NAD binding"/>
    <property type="evidence" value="ECO:0007669"/>
    <property type="project" value="InterPro"/>
</dbReference>
<dbReference type="GO" id="GO:0006102">
    <property type="term" value="P:isocitrate metabolic process"/>
    <property type="evidence" value="ECO:0007669"/>
    <property type="project" value="TreeGrafter"/>
</dbReference>
<dbReference type="GO" id="GO:0006099">
    <property type="term" value="P:tricarboxylic acid cycle"/>
    <property type="evidence" value="ECO:0007669"/>
    <property type="project" value="UniProtKB-KW"/>
</dbReference>
<dbReference type="FunFam" id="3.40.718.10:FF:000001">
    <property type="entry name" value="Isocitrate dehydrogenase [NAD] subunit, mitochondrial"/>
    <property type="match status" value="1"/>
</dbReference>
<dbReference type="Gene3D" id="3.40.718.10">
    <property type="entry name" value="Isopropylmalate Dehydrogenase"/>
    <property type="match status" value="1"/>
</dbReference>
<dbReference type="InterPro" id="IPR019818">
    <property type="entry name" value="IsoCit/isopropylmalate_DH_CS"/>
</dbReference>
<dbReference type="InterPro" id="IPR004434">
    <property type="entry name" value="Isocitrate_DH_NAD"/>
</dbReference>
<dbReference type="InterPro" id="IPR024084">
    <property type="entry name" value="IsoPropMal-DH-like_dom"/>
</dbReference>
<dbReference type="NCBIfam" id="TIGR00175">
    <property type="entry name" value="mito_nad_idh"/>
    <property type="match status" value="1"/>
</dbReference>
<dbReference type="PANTHER" id="PTHR11835">
    <property type="entry name" value="DECARBOXYLATING DEHYDROGENASES-ISOCITRATE, ISOPROPYLMALATE, TARTRATE"/>
    <property type="match status" value="1"/>
</dbReference>
<dbReference type="PANTHER" id="PTHR11835:SF42">
    <property type="entry name" value="ISOCITRATE DEHYDROGENASE [NAD] SUBUNIT BETA, MITOCHONDRIAL"/>
    <property type="match status" value="1"/>
</dbReference>
<dbReference type="Pfam" id="PF00180">
    <property type="entry name" value="Iso_dh"/>
    <property type="match status" value="1"/>
</dbReference>
<dbReference type="SMART" id="SM01329">
    <property type="entry name" value="Iso_dh"/>
    <property type="match status" value="1"/>
</dbReference>
<dbReference type="SUPFAM" id="SSF53659">
    <property type="entry name" value="Isocitrate/Isopropylmalate dehydrogenase-like"/>
    <property type="match status" value="1"/>
</dbReference>
<dbReference type="PROSITE" id="PS00470">
    <property type="entry name" value="IDH_IMDH"/>
    <property type="match status" value="1"/>
</dbReference>
<evidence type="ECO:0000250" key="1"/>
<evidence type="ECO:0000250" key="2">
    <source>
        <dbReference type="UniProtKB" id="P50213"/>
    </source>
</evidence>
<evidence type="ECO:0000255" key="3"/>
<evidence type="ECO:0000305" key="4"/>
<comment type="function">
    <text evidence="1">Performs an essential role in the oxidative function of the citric acid cycle.</text>
</comment>
<comment type="catalytic activity">
    <reaction>
        <text>D-threo-isocitrate + NAD(+) = 2-oxoglutarate + CO2 + NADH</text>
        <dbReference type="Rhea" id="RHEA:23632"/>
        <dbReference type="ChEBI" id="CHEBI:15562"/>
        <dbReference type="ChEBI" id="CHEBI:16526"/>
        <dbReference type="ChEBI" id="CHEBI:16810"/>
        <dbReference type="ChEBI" id="CHEBI:57540"/>
        <dbReference type="ChEBI" id="CHEBI:57945"/>
        <dbReference type="EC" id="1.1.1.41"/>
    </reaction>
</comment>
<comment type="cofactor">
    <cofactor>
        <name>Mg(2+)</name>
        <dbReference type="ChEBI" id="CHEBI:18420"/>
    </cofactor>
    <cofactor>
        <name>Mn(2+)</name>
        <dbReference type="ChEBI" id="CHEBI:29035"/>
    </cofactor>
    <text>Binds 1 Mg(2+) or Mn(2+) ion per subunit.</text>
</comment>
<comment type="subunit">
    <text evidence="1">Octamer of two non-identical subunits IDH1 and IDH2.</text>
</comment>
<comment type="subcellular location">
    <subcellularLocation>
        <location evidence="1">Mitochondrion</location>
    </subcellularLocation>
</comment>
<comment type="similarity">
    <text evidence="4">Belongs to the isocitrate and isopropylmalate dehydrogenases family.</text>
</comment>
<gene>
    <name type="primary">IDH1</name>
</gene>
<accession>O13302</accession>
<organism>
    <name type="scientific">Ajellomyces capsulatus</name>
    <name type="common">Darling's disease fungus</name>
    <name type="synonym">Histoplasma capsulatum</name>
    <dbReference type="NCBI Taxonomy" id="5037"/>
    <lineage>
        <taxon>Eukaryota</taxon>
        <taxon>Fungi</taxon>
        <taxon>Dikarya</taxon>
        <taxon>Ascomycota</taxon>
        <taxon>Pezizomycotina</taxon>
        <taxon>Eurotiomycetes</taxon>
        <taxon>Eurotiomycetidae</taxon>
        <taxon>Onygenales</taxon>
        <taxon>Ajellomycetaceae</taxon>
        <taxon>Histoplasma</taxon>
    </lineage>
</organism>
<keyword id="KW-0460">Magnesium</keyword>
<keyword id="KW-0464">Manganese</keyword>
<keyword id="KW-0479">Metal-binding</keyword>
<keyword id="KW-0496">Mitochondrion</keyword>
<keyword id="KW-0520">NAD</keyword>
<keyword id="KW-0560">Oxidoreductase</keyword>
<keyword id="KW-0809">Transit peptide</keyword>
<keyword id="KW-0816">Tricarboxylic acid cycle</keyword>
<reference key="1">
    <citation type="journal article" date="1999" name="Yeast">
        <title>Isolation of a Histoplasma capsulatum cDNA that complements a mitochondrial NAD(+)-isocitrate dehydrogenase subunit I-deficient mutant of Saccharomyces cerevisiae.</title>
        <authorList>
            <person name="Johnson C.H."/>
            <person name="McEwen J.E."/>
        </authorList>
    </citation>
    <scope>NUCLEOTIDE SEQUENCE [MRNA]</scope>
    <source>
        <strain>ATCC 26032 / G217B</strain>
    </source>
</reference>
<feature type="transit peptide" description="Mitochondrion" evidence="3">
    <location>
        <begin position="1"/>
        <end position="35"/>
    </location>
</feature>
<feature type="chain" id="PRO_0000014428" description="Isocitrate dehydrogenase [NAD] subunit 1, mitochondrial">
    <location>
        <begin position="36"/>
        <end position="388"/>
    </location>
</feature>
<feature type="binding site" evidence="1">
    <location>
        <position position="137"/>
    </location>
    <ligand>
        <name>substrate</name>
    </ligand>
</feature>
<feature type="binding site" evidence="1">
    <location>
        <position position="168"/>
    </location>
    <ligand>
        <name>substrate</name>
    </ligand>
</feature>
<feature type="binding site" evidence="2">
    <location>
        <position position="255"/>
    </location>
    <ligand>
        <name>Mg(2+)</name>
        <dbReference type="ChEBI" id="CHEBI:18420"/>
    </ligand>
</feature>
<feature type="binding site" evidence="1">
    <location>
        <position position="255"/>
    </location>
    <ligand>
        <name>substrate</name>
    </ligand>
</feature>
<feature type="site" description="Critical for catalysis" evidence="1">
    <location>
        <position position="175"/>
    </location>
</feature>
<feature type="site" description="Critical for catalysis" evidence="1">
    <location>
        <position position="222"/>
    </location>
</feature>
<name>IDH1_AJECA</name>
<sequence>MFSLRTAQPAQSLFRAATNTYSTSLPRSAIAARSFATVQSDIFKPTKYGGKYTVTLIPGDGIGTEVAESVKTIFKADNVPIEWEQVDVSGLDAGNKHSEDLFKESIASLKRNKLGLKGILHTPVERSGHQSFNVALRQELDIYASIVLIKNIPGYKTRHDNVDLCIIRENTEGEYSGLEHQSVSGVVESLKIITRAKSERIAKFAFSFALANNRKKVTCIHKANIMKLADGLFRSTFHKVAESYPTLETNDMIVDNASMQAVARPQQFDVMVMPNLYGGILSNVGAALVGGPGIVPGCNMGRDVAVFEPGCRHVGLDIKGKDQANPTALILSGSMLLRHLGLDEHANRISKAVYDVIGEGVTRTRDMGGQASTHEFTRAVLDKMESAL</sequence>
<protein>
    <recommendedName>
        <fullName>Isocitrate dehydrogenase [NAD] subunit 1, mitochondrial</fullName>
        <ecNumber>1.1.1.41</ecNumber>
    </recommendedName>
    <alternativeName>
        <fullName>Isocitric dehydrogenase</fullName>
    </alternativeName>
    <alternativeName>
        <fullName>NAD(+)-specific ICDH</fullName>
    </alternativeName>
</protein>